<name>MGSA_BACAH</name>
<evidence type="ECO:0000255" key="1">
    <source>
        <dbReference type="HAMAP-Rule" id="MF_00549"/>
    </source>
</evidence>
<accession>A0RBY7</accession>
<dbReference type="EC" id="4.2.3.3" evidence="1"/>
<dbReference type="EMBL" id="CP000485">
    <property type="protein sequence ID" value="ABK84730.1"/>
    <property type="molecule type" value="Genomic_DNA"/>
</dbReference>
<dbReference type="RefSeq" id="WP_000684755.1">
    <property type="nucleotide sequence ID" value="NC_008600.1"/>
</dbReference>
<dbReference type="SMR" id="A0RBY7"/>
<dbReference type="KEGG" id="btl:BALH_1387"/>
<dbReference type="HOGENOM" id="CLU_120420_1_0_9"/>
<dbReference type="GO" id="GO:0005829">
    <property type="term" value="C:cytosol"/>
    <property type="evidence" value="ECO:0007669"/>
    <property type="project" value="TreeGrafter"/>
</dbReference>
<dbReference type="GO" id="GO:0008929">
    <property type="term" value="F:methylglyoxal synthase activity"/>
    <property type="evidence" value="ECO:0007669"/>
    <property type="project" value="UniProtKB-UniRule"/>
</dbReference>
<dbReference type="GO" id="GO:0019242">
    <property type="term" value="P:methylglyoxal biosynthetic process"/>
    <property type="evidence" value="ECO:0007669"/>
    <property type="project" value="UniProtKB-UniRule"/>
</dbReference>
<dbReference type="CDD" id="cd01422">
    <property type="entry name" value="MGS"/>
    <property type="match status" value="1"/>
</dbReference>
<dbReference type="FunFam" id="3.40.50.1380:FF:000006">
    <property type="entry name" value="Methylglyoxal synthase"/>
    <property type="match status" value="1"/>
</dbReference>
<dbReference type="Gene3D" id="3.40.50.1380">
    <property type="entry name" value="Methylglyoxal synthase-like domain"/>
    <property type="match status" value="1"/>
</dbReference>
<dbReference type="HAMAP" id="MF_00549">
    <property type="entry name" value="Methylglyoxal_synth"/>
    <property type="match status" value="1"/>
</dbReference>
<dbReference type="InterPro" id="IPR004363">
    <property type="entry name" value="Methylgl_synth"/>
</dbReference>
<dbReference type="InterPro" id="IPR018148">
    <property type="entry name" value="Methylglyoxal_synth_AS"/>
</dbReference>
<dbReference type="InterPro" id="IPR011607">
    <property type="entry name" value="MGS-like_dom"/>
</dbReference>
<dbReference type="InterPro" id="IPR036914">
    <property type="entry name" value="MGS-like_dom_sf"/>
</dbReference>
<dbReference type="NCBIfam" id="TIGR00160">
    <property type="entry name" value="MGSA"/>
    <property type="match status" value="1"/>
</dbReference>
<dbReference type="NCBIfam" id="NF003559">
    <property type="entry name" value="PRK05234.1"/>
    <property type="match status" value="1"/>
</dbReference>
<dbReference type="PANTHER" id="PTHR30492">
    <property type="entry name" value="METHYLGLYOXAL SYNTHASE"/>
    <property type="match status" value="1"/>
</dbReference>
<dbReference type="PANTHER" id="PTHR30492:SF0">
    <property type="entry name" value="METHYLGLYOXAL SYNTHASE"/>
    <property type="match status" value="1"/>
</dbReference>
<dbReference type="Pfam" id="PF02142">
    <property type="entry name" value="MGS"/>
    <property type="match status" value="1"/>
</dbReference>
<dbReference type="PIRSF" id="PIRSF006614">
    <property type="entry name" value="Methylglyox_syn"/>
    <property type="match status" value="1"/>
</dbReference>
<dbReference type="SMART" id="SM00851">
    <property type="entry name" value="MGS"/>
    <property type="match status" value="1"/>
</dbReference>
<dbReference type="SUPFAM" id="SSF52335">
    <property type="entry name" value="Methylglyoxal synthase-like"/>
    <property type="match status" value="1"/>
</dbReference>
<dbReference type="PROSITE" id="PS01335">
    <property type="entry name" value="METHYLGLYOXAL_SYNTH"/>
    <property type="match status" value="1"/>
</dbReference>
<dbReference type="PROSITE" id="PS51855">
    <property type="entry name" value="MGS"/>
    <property type="match status" value="1"/>
</dbReference>
<reference key="1">
    <citation type="journal article" date="2007" name="J. Bacteriol.">
        <title>The complete genome sequence of Bacillus thuringiensis Al Hakam.</title>
        <authorList>
            <person name="Challacombe J.F."/>
            <person name="Altherr M.R."/>
            <person name="Xie G."/>
            <person name="Bhotika S.S."/>
            <person name="Brown N."/>
            <person name="Bruce D."/>
            <person name="Campbell C.S."/>
            <person name="Campbell M.L."/>
            <person name="Chen J."/>
            <person name="Chertkov O."/>
            <person name="Cleland C."/>
            <person name="Dimitrijevic M."/>
            <person name="Doggett N.A."/>
            <person name="Fawcett J.J."/>
            <person name="Glavina T."/>
            <person name="Goodwin L.A."/>
            <person name="Green L.D."/>
            <person name="Han C.S."/>
            <person name="Hill K.K."/>
            <person name="Hitchcock P."/>
            <person name="Jackson P.J."/>
            <person name="Keim P."/>
            <person name="Kewalramani A.R."/>
            <person name="Longmire J."/>
            <person name="Lucas S."/>
            <person name="Malfatti S."/>
            <person name="Martinez D."/>
            <person name="McMurry K."/>
            <person name="Meincke L.J."/>
            <person name="Misra M."/>
            <person name="Moseman B.L."/>
            <person name="Mundt M."/>
            <person name="Munk A.C."/>
            <person name="Okinaka R.T."/>
            <person name="Parson-Quintana B."/>
            <person name="Reilly L.P."/>
            <person name="Richardson P."/>
            <person name="Robinson D.L."/>
            <person name="Saunders E."/>
            <person name="Tapia R."/>
            <person name="Tesmer J.G."/>
            <person name="Thayer N."/>
            <person name="Thompson L.S."/>
            <person name="Tice H."/>
            <person name="Ticknor L.O."/>
            <person name="Wills P.L."/>
            <person name="Gilna P."/>
            <person name="Brettin T.S."/>
        </authorList>
    </citation>
    <scope>NUCLEOTIDE SEQUENCE [LARGE SCALE GENOMIC DNA]</scope>
    <source>
        <strain>Al Hakam</strain>
    </source>
</reference>
<feature type="chain" id="PRO_1000017784" description="Methylglyoxal synthase">
    <location>
        <begin position="1"/>
        <end position="131"/>
    </location>
</feature>
<feature type="domain" description="MGS-like" evidence="1">
    <location>
        <begin position="1"/>
        <end position="131"/>
    </location>
</feature>
<feature type="active site" description="Proton donor/acceptor" evidence="1">
    <location>
        <position position="60"/>
    </location>
</feature>
<feature type="binding site" evidence="1">
    <location>
        <position position="8"/>
    </location>
    <ligand>
        <name>substrate</name>
    </ligand>
</feature>
<feature type="binding site" evidence="1">
    <location>
        <position position="12"/>
    </location>
    <ligand>
        <name>substrate</name>
    </ligand>
</feature>
<feature type="binding site" evidence="1">
    <location>
        <begin position="34"/>
        <end position="37"/>
    </location>
    <ligand>
        <name>substrate</name>
    </ligand>
</feature>
<feature type="binding site" evidence="1">
    <location>
        <begin position="54"/>
        <end position="55"/>
    </location>
    <ligand>
        <name>substrate</name>
    </ligand>
</feature>
<feature type="binding site" evidence="1">
    <location>
        <position position="87"/>
    </location>
    <ligand>
        <name>substrate</name>
    </ligand>
</feature>
<keyword id="KW-0456">Lyase</keyword>
<gene>
    <name evidence="1" type="primary">mgsA</name>
    <name type="ordered locus">BALH_1387</name>
</gene>
<organism>
    <name type="scientific">Bacillus thuringiensis (strain Al Hakam)</name>
    <dbReference type="NCBI Taxonomy" id="412694"/>
    <lineage>
        <taxon>Bacteria</taxon>
        <taxon>Bacillati</taxon>
        <taxon>Bacillota</taxon>
        <taxon>Bacilli</taxon>
        <taxon>Bacillales</taxon>
        <taxon>Bacillaceae</taxon>
        <taxon>Bacillus</taxon>
        <taxon>Bacillus cereus group</taxon>
    </lineage>
</organism>
<protein>
    <recommendedName>
        <fullName evidence="1">Methylglyoxal synthase</fullName>
        <shortName evidence="1">MGS</shortName>
        <ecNumber evidence="1">4.2.3.3</ecNumber>
    </recommendedName>
</protein>
<sequence length="131" mass="14686">MKIALIAHDKKKDDMVSFAYAYKPIFEQHELFATGTTGLRIMEATGLVVTRYQSGPLGGDQEIGAMIAKNDLDMVIFFRDPLTAQPHEPDVNALLRLCDVYAIPLATNMASAEMLMHALERGDLDYRKLRK</sequence>
<comment type="function">
    <text evidence="1">Catalyzes the formation of methylglyoxal from dihydroxyacetone phosphate.</text>
</comment>
<comment type="catalytic activity">
    <reaction evidence="1">
        <text>dihydroxyacetone phosphate = methylglyoxal + phosphate</text>
        <dbReference type="Rhea" id="RHEA:17937"/>
        <dbReference type="ChEBI" id="CHEBI:17158"/>
        <dbReference type="ChEBI" id="CHEBI:43474"/>
        <dbReference type="ChEBI" id="CHEBI:57642"/>
        <dbReference type="EC" id="4.2.3.3"/>
    </reaction>
</comment>
<comment type="similarity">
    <text evidence="1">Belongs to the methylglyoxal synthase family.</text>
</comment>
<proteinExistence type="inferred from homology"/>